<feature type="transit peptide" description="Chloroplast" evidence="1">
    <location>
        <begin position="1"/>
        <end position="73"/>
    </location>
</feature>
<feature type="chain" id="PRO_0000398764" description="Protein PAM71, chloroplastic">
    <location>
        <begin position="74"/>
        <end position="370"/>
    </location>
</feature>
<feature type="topological domain" description="Stromal" evidence="7">
    <location>
        <begin position="74"/>
        <end position="113"/>
    </location>
</feature>
<feature type="transmembrane region" description="Helical" evidence="1">
    <location>
        <begin position="114"/>
        <end position="134"/>
    </location>
</feature>
<feature type="topological domain" description="Lumenal, thylakoid" evidence="7">
    <location>
        <begin position="135"/>
        <end position="161"/>
    </location>
</feature>
<feature type="transmembrane region" description="Helical" evidence="1">
    <location>
        <begin position="162"/>
        <end position="182"/>
    </location>
</feature>
<feature type="topological domain" description="Stromal" evidence="7">
    <location>
        <begin position="183"/>
        <end position="188"/>
    </location>
</feature>
<feature type="transmembrane region" description="Helical" evidence="1">
    <location>
        <begin position="189"/>
        <end position="209"/>
    </location>
</feature>
<feature type="topological domain" description="Lumenal, thylakoid" evidence="7">
    <location>
        <begin position="210"/>
        <end position="228"/>
    </location>
</feature>
<feature type="transmembrane region" description="Helical" evidence="1">
    <location>
        <begin position="229"/>
        <end position="249"/>
    </location>
</feature>
<feature type="topological domain" description="Stromal" evidence="7">
    <location>
        <begin position="250"/>
        <end position="275"/>
    </location>
</feature>
<feature type="transmembrane region" description="Helical" evidence="1">
    <location>
        <begin position="276"/>
        <end position="296"/>
    </location>
</feature>
<feature type="topological domain" description="Lumenal, thylakoid" evidence="7">
    <location>
        <begin position="297"/>
        <end position="315"/>
    </location>
</feature>
<feature type="transmembrane region" description="Helical" evidence="1">
    <location>
        <begin position="316"/>
        <end position="336"/>
    </location>
</feature>
<feature type="topological domain" description="Stromal" evidence="7">
    <location>
        <begin position="337"/>
        <end position="348"/>
    </location>
</feature>
<feature type="transmembrane region" description="Helical" evidence="1">
    <location>
        <begin position="349"/>
        <end position="369"/>
    </location>
</feature>
<feature type="topological domain" description="Lumenal, thylakoid" evidence="3">
    <location>
        <position position="370"/>
    </location>
</feature>
<feature type="region of interest" description="Disordered" evidence="2">
    <location>
        <begin position="1"/>
        <end position="38"/>
    </location>
</feature>
<feature type="compositionally biased region" description="Low complexity" evidence="2">
    <location>
        <begin position="22"/>
        <end position="38"/>
    </location>
</feature>
<feature type="sequence conflict" description="In Ref. 3; AAN28814/AAK73997." evidence="7" ref="3">
    <original>Y</original>
    <variation>S</variation>
    <location>
        <position position="54"/>
    </location>
</feature>
<protein>
    <recommendedName>
        <fullName evidence="5">Protein PAM71, chloroplastic</fullName>
    </recommendedName>
    <alternativeName>
        <fullName evidence="6">CA(2+)/H(+) ANTIPORTER 1</fullName>
    </alternativeName>
    <alternativeName>
        <fullName evidence="7">GDT1-like protein 1</fullName>
    </alternativeName>
    <alternativeName>
        <fullName evidence="5">PHOTOSYNTHESIS AFFECTED MUTANT71</fullName>
    </alternativeName>
</protein>
<keyword id="KW-0150">Chloroplast</keyword>
<keyword id="KW-0472">Membrane</keyword>
<keyword id="KW-0934">Plastid</keyword>
<keyword id="KW-1185">Reference proteome</keyword>
<keyword id="KW-0793">Thylakoid</keyword>
<keyword id="KW-0809">Transit peptide</keyword>
<keyword id="KW-0812">Transmembrane</keyword>
<keyword id="KW-1133">Transmembrane helix</keyword>
<accession>Q94AX5</accession>
<accession>Q9SH65</accession>
<name>PAM71_ARATH</name>
<comment type="function">
    <text evidence="3 4">Mn(2+)/H(+) exchanger, which transport Mn(2+)from the chloroplast stroma into the acidic thylakoid lumen (PubMed:27020959). Might be a chloroplast-localized Ca(2+)/H(+) antiporter (PubMed:27302341). Regulates Ca(2+), Mn(2+) and pH homeostasis (PubMed:27302341). Required for chloroplast development (PubMed:27302341).</text>
</comment>
<comment type="subunit">
    <text evidence="3">Homodimer.</text>
</comment>
<comment type="subcellular location">
    <subcellularLocation>
        <location evidence="4">Plastid</location>
        <location evidence="4">Chloroplast membrane</location>
        <topology evidence="1">Multi-pass membrane protein</topology>
    </subcellularLocation>
    <subcellularLocation>
        <location evidence="3">Thylakoid</location>
    </subcellularLocation>
</comment>
<comment type="disruption phenotype">
    <text evidence="3 4">Defects in photosynthesis and reduced growth rate (PubMed:27020959, PubMed:27302341). Pale yellow leaves with reduced PSII activity (PubMed:27302341). Altered Ca(2+) and Mn(2+) partitioning in chloroplasts and reduced Mn(2+) binding to PSII (PubMed:27020959).</text>
</comment>
<comment type="similarity">
    <text evidence="7">Belongs to the GDT1 family.</text>
</comment>
<comment type="sequence caution" evidence="7">
    <conflict type="erroneous gene model prediction">
        <sequence resource="EMBL-CDS" id="AAF24562"/>
    </conflict>
</comment>
<evidence type="ECO:0000255" key="1"/>
<evidence type="ECO:0000256" key="2">
    <source>
        <dbReference type="SAM" id="MobiDB-lite"/>
    </source>
</evidence>
<evidence type="ECO:0000269" key="3">
    <source>
    </source>
</evidence>
<evidence type="ECO:0000269" key="4">
    <source>
    </source>
</evidence>
<evidence type="ECO:0000303" key="5">
    <source>
    </source>
</evidence>
<evidence type="ECO:0000303" key="6">
    <source>
    </source>
</evidence>
<evidence type="ECO:0000305" key="7"/>
<evidence type="ECO:0000312" key="8">
    <source>
        <dbReference type="Araport" id="AT1G64150"/>
    </source>
</evidence>
<evidence type="ECO:0000312" key="9">
    <source>
        <dbReference type="EMBL" id="AAF24562.1"/>
    </source>
</evidence>
<organism>
    <name type="scientific">Arabidopsis thaliana</name>
    <name type="common">Mouse-ear cress</name>
    <dbReference type="NCBI Taxonomy" id="3702"/>
    <lineage>
        <taxon>Eukaryota</taxon>
        <taxon>Viridiplantae</taxon>
        <taxon>Streptophyta</taxon>
        <taxon>Embryophyta</taxon>
        <taxon>Tracheophyta</taxon>
        <taxon>Spermatophyta</taxon>
        <taxon>Magnoliopsida</taxon>
        <taxon>eudicotyledons</taxon>
        <taxon>Gunneridae</taxon>
        <taxon>Pentapetalae</taxon>
        <taxon>rosids</taxon>
        <taxon>malvids</taxon>
        <taxon>Brassicales</taxon>
        <taxon>Brassicaceae</taxon>
        <taxon>Camelineae</taxon>
        <taxon>Arabidopsis</taxon>
    </lineage>
</organism>
<sequence length="370" mass="39074">MLSLNLSESLRIPFQNPRPPKSDFSSTSSSPSSSSRRCVSAYPIPIGFSVRNQYFSRCLTQLRRNESQQLGFRCFQRNDAACYLEKAESEEHDRNLDVLVESSIAHSRREIQRVLMFLAVSGSVALLGTDPAFAASSIPNVTQSLVTSFGDLGDISSGFASAFLLIFFSELGDKTFFIAALLAARNSAATVFVGTFGALGIMTIISVVLGRTFHYVDEVLPFRFGGTDLPIDDIAAVCLLVYFGVSTLLDAVSDEGKADEEQKEAELAVSELSGNGAGIVAAANTIISTFALVFVAEWGDKSFFSTIALAAASSPLGVIAGALAGHGAATLLAVLGGSLLGNFLSEKAIAYVGGVLFLVFAAVTVAEIVT</sequence>
<dbReference type="EMBL" id="AC007764">
    <property type="protein sequence ID" value="AAF24562.1"/>
    <property type="status" value="ALT_SEQ"/>
    <property type="molecule type" value="Genomic_DNA"/>
</dbReference>
<dbReference type="EMBL" id="CP002684">
    <property type="protein sequence ID" value="AEE34202.1"/>
    <property type="molecule type" value="Genomic_DNA"/>
</dbReference>
<dbReference type="EMBL" id="AY045639">
    <property type="protein sequence ID" value="AAK73997.1"/>
    <property type="molecule type" value="mRNA"/>
</dbReference>
<dbReference type="EMBL" id="AY143875">
    <property type="protein sequence ID" value="AAN28814.1"/>
    <property type="molecule type" value="mRNA"/>
</dbReference>
<dbReference type="RefSeq" id="NP_564825.1">
    <property type="nucleotide sequence ID" value="NM_105088.4"/>
</dbReference>
<dbReference type="BioGRID" id="27940">
    <property type="interactions" value="25"/>
</dbReference>
<dbReference type="FunCoup" id="Q94AX5">
    <property type="interactions" value="711"/>
</dbReference>
<dbReference type="IntAct" id="Q94AX5">
    <property type="interactions" value="25"/>
</dbReference>
<dbReference type="STRING" id="3702.Q94AX5"/>
<dbReference type="TCDB" id="2.A.106.1.5">
    <property type="family name" value="the ca(2+):h(+) antiporter-2 (caca2) family"/>
</dbReference>
<dbReference type="GlyGen" id="Q94AX5">
    <property type="glycosylation" value="1 site"/>
</dbReference>
<dbReference type="PaxDb" id="3702-AT1G64150.1"/>
<dbReference type="ProteomicsDB" id="248747"/>
<dbReference type="EnsemblPlants" id="AT1G64150.1">
    <property type="protein sequence ID" value="AT1G64150.1"/>
    <property type="gene ID" value="AT1G64150"/>
</dbReference>
<dbReference type="GeneID" id="842719"/>
<dbReference type="Gramene" id="AT1G64150.1">
    <property type="protein sequence ID" value="AT1G64150.1"/>
    <property type="gene ID" value="AT1G64150"/>
</dbReference>
<dbReference type="KEGG" id="ath:AT1G64150"/>
<dbReference type="Araport" id="AT1G64150"/>
<dbReference type="TAIR" id="AT1G64150"/>
<dbReference type="eggNOG" id="KOG2881">
    <property type="taxonomic scope" value="Eukaryota"/>
</dbReference>
<dbReference type="HOGENOM" id="CLU_050130_1_0_1"/>
<dbReference type="InParanoid" id="Q94AX5"/>
<dbReference type="OMA" id="CFQRDEA"/>
<dbReference type="PhylomeDB" id="Q94AX5"/>
<dbReference type="PRO" id="PR:Q94AX5"/>
<dbReference type="Proteomes" id="UP000006548">
    <property type="component" value="Chromosome 1"/>
</dbReference>
<dbReference type="ExpressionAtlas" id="Q94AX5">
    <property type="expression patterns" value="baseline and differential"/>
</dbReference>
<dbReference type="GO" id="GO:0031969">
    <property type="term" value="C:chloroplast membrane"/>
    <property type="evidence" value="ECO:0007669"/>
    <property type="project" value="UniProtKB-SubCell"/>
</dbReference>
<dbReference type="GO" id="GO:0009534">
    <property type="term" value="C:chloroplast thylakoid"/>
    <property type="evidence" value="ECO:0000314"/>
    <property type="project" value="TAIR"/>
</dbReference>
<dbReference type="GO" id="GO:0009535">
    <property type="term" value="C:chloroplast thylakoid membrane"/>
    <property type="evidence" value="ECO:0000314"/>
    <property type="project" value="TAIR"/>
</dbReference>
<dbReference type="GO" id="GO:0015085">
    <property type="term" value="F:calcium ion transmembrane transporter activity"/>
    <property type="evidence" value="ECO:0000314"/>
    <property type="project" value="TAIR"/>
</dbReference>
<dbReference type="GO" id="GO:0015095">
    <property type="term" value="F:magnesium ion transmembrane transporter activity"/>
    <property type="evidence" value="ECO:0000315"/>
    <property type="project" value="TAIR"/>
</dbReference>
<dbReference type="GO" id="GO:0005384">
    <property type="term" value="F:manganese ion transmembrane transporter activity"/>
    <property type="evidence" value="ECO:0000315"/>
    <property type="project" value="TAIR"/>
</dbReference>
<dbReference type="GO" id="GO:0070588">
    <property type="term" value="P:calcium ion transmembrane transport"/>
    <property type="evidence" value="ECO:0000314"/>
    <property type="project" value="TAIR"/>
</dbReference>
<dbReference type="GO" id="GO:0006816">
    <property type="term" value="P:calcium ion transport"/>
    <property type="evidence" value="ECO:0000315"/>
    <property type="project" value="TAIR"/>
</dbReference>
<dbReference type="GO" id="GO:0019722">
    <property type="term" value="P:calcium-mediated signaling"/>
    <property type="evidence" value="ECO:0000270"/>
    <property type="project" value="TAIR"/>
</dbReference>
<dbReference type="GO" id="GO:0010270">
    <property type="term" value="P:photosystem II oxygen evolving complex assembly"/>
    <property type="evidence" value="ECO:0000315"/>
    <property type="project" value="TAIR"/>
</dbReference>
<dbReference type="InterPro" id="IPR001727">
    <property type="entry name" value="GDT1-like"/>
</dbReference>
<dbReference type="InterPro" id="IPR049555">
    <property type="entry name" value="GDT1-like_CS"/>
</dbReference>
<dbReference type="PANTHER" id="PTHR12608:SF6">
    <property type="entry name" value="PROTEIN PAM71, CHLOROPLASTIC"/>
    <property type="match status" value="1"/>
</dbReference>
<dbReference type="PANTHER" id="PTHR12608">
    <property type="entry name" value="TRANSMEMBRANE PROTEIN HTP-1 RELATED"/>
    <property type="match status" value="1"/>
</dbReference>
<dbReference type="Pfam" id="PF01169">
    <property type="entry name" value="GDT1"/>
    <property type="match status" value="2"/>
</dbReference>
<dbReference type="PROSITE" id="PS01214">
    <property type="entry name" value="UPF0016"/>
    <property type="match status" value="1"/>
</dbReference>
<reference key="1">
    <citation type="journal article" date="2000" name="Nature">
        <title>Sequence and analysis of chromosome 1 of the plant Arabidopsis thaliana.</title>
        <authorList>
            <person name="Theologis A."/>
            <person name="Ecker J.R."/>
            <person name="Palm C.J."/>
            <person name="Federspiel N.A."/>
            <person name="Kaul S."/>
            <person name="White O."/>
            <person name="Alonso J."/>
            <person name="Altafi H."/>
            <person name="Araujo R."/>
            <person name="Bowman C.L."/>
            <person name="Brooks S.Y."/>
            <person name="Buehler E."/>
            <person name="Chan A."/>
            <person name="Chao Q."/>
            <person name="Chen H."/>
            <person name="Cheuk R.F."/>
            <person name="Chin C.W."/>
            <person name="Chung M.K."/>
            <person name="Conn L."/>
            <person name="Conway A.B."/>
            <person name="Conway A.R."/>
            <person name="Creasy T.H."/>
            <person name="Dewar K."/>
            <person name="Dunn P."/>
            <person name="Etgu P."/>
            <person name="Feldblyum T.V."/>
            <person name="Feng J.-D."/>
            <person name="Fong B."/>
            <person name="Fujii C.Y."/>
            <person name="Gill J.E."/>
            <person name="Goldsmith A.D."/>
            <person name="Haas B."/>
            <person name="Hansen N.F."/>
            <person name="Hughes B."/>
            <person name="Huizar L."/>
            <person name="Hunter J.L."/>
            <person name="Jenkins J."/>
            <person name="Johnson-Hopson C."/>
            <person name="Khan S."/>
            <person name="Khaykin E."/>
            <person name="Kim C.J."/>
            <person name="Koo H.L."/>
            <person name="Kremenetskaia I."/>
            <person name="Kurtz D.B."/>
            <person name="Kwan A."/>
            <person name="Lam B."/>
            <person name="Langin-Hooper S."/>
            <person name="Lee A."/>
            <person name="Lee J.M."/>
            <person name="Lenz C.A."/>
            <person name="Li J.H."/>
            <person name="Li Y.-P."/>
            <person name="Lin X."/>
            <person name="Liu S.X."/>
            <person name="Liu Z.A."/>
            <person name="Luros J.S."/>
            <person name="Maiti R."/>
            <person name="Marziali A."/>
            <person name="Militscher J."/>
            <person name="Miranda M."/>
            <person name="Nguyen M."/>
            <person name="Nierman W.C."/>
            <person name="Osborne B.I."/>
            <person name="Pai G."/>
            <person name="Peterson J."/>
            <person name="Pham P.K."/>
            <person name="Rizzo M."/>
            <person name="Rooney T."/>
            <person name="Rowley D."/>
            <person name="Sakano H."/>
            <person name="Salzberg S.L."/>
            <person name="Schwartz J.R."/>
            <person name="Shinn P."/>
            <person name="Southwick A.M."/>
            <person name="Sun H."/>
            <person name="Tallon L.J."/>
            <person name="Tambunga G."/>
            <person name="Toriumi M.J."/>
            <person name="Town C.D."/>
            <person name="Utterback T."/>
            <person name="Van Aken S."/>
            <person name="Vaysberg M."/>
            <person name="Vysotskaia V.S."/>
            <person name="Walker M."/>
            <person name="Wu D."/>
            <person name="Yu G."/>
            <person name="Fraser C.M."/>
            <person name="Venter J.C."/>
            <person name="Davis R.W."/>
        </authorList>
    </citation>
    <scope>NUCLEOTIDE SEQUENCE [LARGE SCALE GENOMIC DNA]</scope>
    <source>
        <strain>cv. Columbia</strain>
    </source>
</reference>
<reference key="2">
    <citation type="journal article" date="2017" name="Plant J.">
        <title>Araport11: a complete reannotation of the Arabidopsis thaliana reference genome.</title>
        <authorList>
            <person name="Cheng C.Y."/>
            <person name="Krishnakumar V."/>
            <person name="Chan A.P."/>
            <person name="Thibaud-Nissen F."/>
            <person name="Schobel S."/>
            <person name="Town C.D."/>
        </authorList>
    </citation>
    <scope>GENOME REANNOTATION</scope>
    <source>
        <strain>cv. Columbia</strain>
    </source>
</reference>
<reference key="3">
    <citation type="journal article" date="2003" name="Science">
        <title>Empirical analysis of transcriptional activity in the Arabidopsis genome.</title>
        <authorList>
            <person name="Yamada K."/>
            <person name="Lim J."/>
            <person name="Dale J.M."/>
            <person name="Chen H."/>
            <person name="Shinn P."/>
            <person name="Palm C.J."/>
            <person name="Southwick A.M."/>
            <person name="Wu H.C."/>
            <person name="Kim C.J."/>
            <person name="Nguyen M."/>
            <person name="Pham P.K."/>
            <person name="Cheuk R.F."/>
            <person name="Karlin-Newmann G."/>
            <person name="Liu S.X."/>
            <person name="Lam B."/>
            <person name="Sakano H."/>
            <person name="Wu T."/>
            <person name="Yu G."/>
            <person name="Miranda M."/>
            <person name="Quach H.L."/>
            <person name="Tripp M."/>
            <person name="Chang C.H."/>
            <person name="Lee J.M."/>
            <person name="Toriumi M.J."/>
            <person name="Chan M.M."/>
            <person name="Tang C.C."/>
            <person name="Onodera C.S."/>
            <person name="Deng J.M."/>
            <person name="Akiyama K."/>
            <person name="Ansari Y."/>
            <person name="Arakawa T."/>
            <person name="Banh J."/>
            <person name="Banno F."/>
            <person name="Bowser L."/>
            <person name="Brooks S.Y."/>
            <person name="Carninci P."/>
            <person name="Chao Q."/>
            <person name="Choy N."/>
            <person name="Enju A."/>
            <person name="Goldsmith A.D."/>
            <person name="Gurjal M."/>
            <person name="Hansen N.F."/>
            <person name="Hayashizaki Y."/>
            <person name="Johnson-Hopson C."/>
            <person name="Hsuan V.W."/>
            <person name="Iida K."/>
            <person name="Karnes M."/>
            <person name="Khan S."/>
            <person name="Koesema E."/>
            <person name="Ishida J."/>
            <person name="Jiang P.X."/>
            <person name="Jones T."/>
            <person name="Kawai J."/>
            <person name="Kamiya A."/>
            <person name="Meyers C."/>
            <person name="Nakajima M."/>
            <person name="Narusaka M."/>
            <person name="Seki M."/>
            <person name="Sakurai T."/>
            <person name="Satou M."/>
            <person name="Tamse R."/>
            <person name="Vaysberg M."/>
            <person name="Wallender E.K."/>
            <person name="Wong C."/>
            <person name="Yamamura Y."/>
            <person name="Yuan S."/>
            <person name="Shinozaki K."/>
            <person name="Davis R.W."/>
            <person name="Theologis A."/>
            <person name="Ecker J.R."/>
        </authorList>
    </citation>
    <scope>NUCLEOTIDE SEQUENCE [LARGE SCALE MRNA]</scope>
    <source>
        <strain>cv. Columbia</strain>
    </source>
</reference>
<reference key="4">
    <citation type="journal article" date="2016" name="Mol. Plant">
        <title>A putative chloroplast-localized Ca(2+)/H(+) antiporter CCHA1 is involved in calcium and pH homeostasis and required for PSII function in Arabidopsis.</title>
        <authorList>
            <person name="Wang C."/>
            <person name="Xu W."/>
            <person name="Jin H."/>
            <person name="Zhang T."/>
            <person name="Lai J."/>
            <person name="Zhou X."/>
            <person name="Zhang S."/>
            <person name="Liu S."/>
            <person name="Duan X."/>
            <person name="Wang H."/>
            <person name="Peng C."/>
            <person name="Yang C."/>
        </authorList>
    </citation>
    <scope>FUNCTION</scope>
    <scope>DISRUPTION PHENOTYPE</scope>
    <scope>SUBCELLULAR LOCATION</scope>
</reference>
<reference key="5">
    <citation type="journal article" date="2016" name="Plant Cell">
        <title>The evolutionarily conserved protein PHOTOSYNTHESIS AFFECTED MUTANT71 is required for efficient manganese uptake at the thylakoid membrane in Arabidopsis.</title>
        <authorList>
            <person name="Schneider A."/>
            <person name="Steinberger I."/>
            <person name="Herdean A."/>
            <person name="Gandini C."/>
            <person name="Eisenhut M."/>
            <person name="Kurz S."/>
            <person name="Morper A."/>
            <person name="Hoecker N."/>
            <person name="Ruehle T."/>
            <person name="Labs M."/>
            <person name="Fluegge U.I."/>
            <person name="Geimer S."/>
            <person name="Schmidt S.B."/>
            <person name="Husted S."/>
            <person name="Weber A.P."/>
            <person name="Spetea C."/>
            <person name="Leister D."/>
        </authorList>
    </citation>
    <scope>FUNCTION</scope>
    <scope>DISRUPTION PHENOTYPE</scope>
    <scope>SUBCELLULAR LOCATION</scope>
    <scope>SUBUNIT</scope>
    <scope>TOPOLOGY</scope>
</reference>
<gene>
    <name evidence="5" type="primary">PAM71</name>
    <name evidence="6" type="synonym">CCHA1</name>
    <name evidence="8" type="ordered locus">At1g64150</name>
    <name evidence="9" type="ORF">F22C12.9</name>
</gene>
<proteinExistence type="evidence at protein level"/>